<comment type="function">
    <text evidence="4">Proteoglycan required for the timing of seed germination. May function in the abscisic acid (ABA) response.</text>
</comment>
<comment type="subcellular location">
    <subcellularLocation>
        <location evidence="1">Secreted</location>
        <location evidence="1">Cell wall</location>
    </subcellularLocation>
</comment>
<comment type="tissue specificity">
    <text evidence="4">Specifically expressed in root tips.</text>
</comment>
<comment type="developmental stage">
    <text evidence="4">Expressed in embryos from the initiation of germination.</text>
</comment>
<comment type="disruption phenotype">
    <text evidence="4">No visible phenotype under normal growth conditions, but freshly harvested seeds of mutant plants show reduced seed dormancy.</text>
</comment>
<comment type="miscellaneous">
    <text evidence="4">Over-expression of AGP30 severely affects shoot development.</text>
</comment>
<comment type="similarity">
    <text evidence="6">Belongs to the non-classical AGP family.</text>
</comment>
<dbReference type="EMBL" id="U78721">
    <property type="protein sequence ID" value="AAC69131.1"/>
    <property type="molecule type" value="Genomic_DNA"/>
</dbReference>
<dbReference type="EMBL" id="CP002685">
    <property type="protein sequence ID" value="AEC08885.1"/>
    <property type="molecule type" value="Genomic_DNA"/>
</dbReference>
<dbReference type="EMBL" id="BT002866">
    <property type="protein sequence ID" value="AAO22683.1"/>
    <property type="molecule type" value="mRNA"/>
</dbReference>
<dbReference type="EMBL" id="BT020350">
    <property type="protein sequence ID" value="AAV85705.1"/>
    <property type="molecule type" value="mRNA"/>
</dbReference>
<dbReference type="PIR" id="F84749">
    <property type="entry name" value="F84749"/>
</dbReference>
<dbReference type="RefSeq" id="NP_180935.1">
    <property type="nucleotide sequence ID" value="NM_128938.3"/>
</dbReference>
<dbReference type="SMR" id="P93013"/>
<dbReference type="FunCoup" id="P93013">
    <property type="interactions" value="80"/>
</dbReference>
<dbReference type="STRING" id="3702.P93013"/>
<dbReference type="GlyCosmos" id="P93013">
    <property type="glycosylation" value="1 site, No reported glycans"/>
</dbReference>
<dbReference type="GlyGen" id="P93013">
    <property type="glycosylation" value="1 site"/>
</dbReference>
<dbReference type="iPTMnet" id="P93013"/>
<dbReference type="PaxDb" id="3702-AT2G33790.1"/>
<dbReference type="ProteomicsDB" id="244844"/>
<dbReference type="EnsemblPlants" id="AT2G33790.1">
    <property type="protein sequence ID" value="AT2G33790.1"/>
    <property type="gene ID" value="AT2G33790"/>
</dbReference>
<dbReference type="GeneID" id="817946"/>
<dbReference type="Gramene" id="AT2G33790.1">
    <property type="protein sequence ID" value="AT2G33790.1"/>
    <property type="gene ID" value="AT2G33790"/>
</dbReference>
<dbReference type="KEGG" id="ath:AT2G33790"/>
<dbReference type="Araport" id="AT2G33790"/>
<dbReference type="TAIR" id="AT2G33790">
    <property type="gene designation" value="AGP30"/>
</dbReference>
<dbReference type="eggNOG" id="ENOG502QPUY">
    <property type="taxonomic scope" value="Eukaryota"/>
</dbReference>
<dbReference type="HOGENOM" id="CLU_055714_1_0_1"/>
<dbReference type="InParanoid" id="P93013"/>
<dbReference type="OMA" id="CKRGQWA"/>
<dbReference type="PhylomeDB" id="P93013"/>
<dbReference type="PRO" id="PR:P93013"/>
<dbReference type="Proteomes" id="UP000006548">
    <property type="component" value="Chromosome 2"/>
</dbReference>
<dbReference type="ExpressionAtlas" id="P93013">
    <property type="expression patterns" value="baseline and differential"/>
</dbReference>
<dbReference type="GO" id="GO:0005576">
    <property type="term" value="C:extracellular region"/>
    <property type="evidence" value="ECO:0007669"/>
    <property type="project" value="UniProtKB-KW"/>
</dbReference>
<dbReference type="GO" id="GO:2000280">
    <property type="term" value="P:regulation of root development"/>
    <property type="evidence" value="ECO:0000315"/>
    <property type="project" value="UniProtKB"/>
</dbReference>
<dbReference type="GO" id="GO:2000033">
    <property type="term" value="P:regulation of seed dormancy process"/>
    <property type="evidence" value="ECO:0000315"/>
    <property type="project" value="UniProtKB"/>
</dbReference>
<dbReference type="PANTHER" id="PTHR33470:SF55">
    <property type="entry name" value="NON-CLASSICAL ARABINOGALACTAN PROTEIN 30"/>
    <property type="match status" value="1"/>
</dbReference>
<dbReference type="PANTHER" id="PTHR33470">
    <property type="entry name" value="OS01G0164075 PROTEIN"/>
    <property type="match status" value="1"/>
</dbReference>
<dbReference type="Pfam" id="PF01190">
    <property type="entry name" value="Pollen_Ole_e_1"/>
    <property type="match status" value="1"/>
</dbReference>
<sequence>MGIIGKSVSLTLFALLCFTSSVFTLGVNQPGSSDPFHSLPQHLPLPPIKLPTLPPAKAPIKLPAYPPAKAPIKLPTLPPAKAPIKLPTLPPIKPPVLPPVYPPKYNKTLVAVRGVVYCKACKYAGVNNVQGAKPVKDAVVRLVCKNKKNSISETKTDKNGYFMLLAPKTVTNYDIKGCRAFLVKSPDTKCSKVSSLHDGGKGSVLKPVLKPGFSSTIMRWFKYSVYNVGPFAFEPTCPK</sequence>
<keyword id="KW-0134">Cell wall</keyword>
<keyword id="KW-0325">Glycoprotein</keyword>
<keyword id="KW-0654">Proteoglycan</keyword>
<keyword id="KW-1185">Reference proteome</keyword>
<keyword id="KW-0964">Secreted</keyword>
<keyword id="KW-0732">Signal</keyword>
<proteinExistence type="evidence at transcript level"/>
<accession>P93013</accession>
<evidence type="ECO:0000250" key="1">
    <source>
        <dbReference type="UniProtKB" id="Q9FZA2"/>
    </source>
</evidence>
<evidence type="ECO:0000255" key="2"/>
<evidence type="ECO:0000255" key="3">
    <source>
        <dbReference type="PROSITE-ProRule" id="PRU00498"/>
    </source>
</evidence>
<evidence type="ECO:0000269" key="4">
    <source>
    </source>
</evidence>
<evidence type="ECO:0000303" key="5">
    <source>
    </source>
</evidence>
<evidence type="ECO:0000305" key="6"/>
<evidence type="ECO:0000312" key="7">
    <source>
        <dbReference type="Araport" id="AT2G33790"/>
    </source>
</evidence>
<feature type="signal peptide" evidence="2">
    <location>
        <begin position="1"/>
        <end position="24"/>
    </location>
</feature>
<feature type="chain" id="PRO_0000432825" description="Non-classical arabinogalactan protein 30" evidence="2">
    <location>
        <begin position="25"/>
        <end position="239"/>
    </location>
</feature>
<feature type="glycosylation site" description="N-linked (GlcNAc...) asparagine" evidence="3">
    <location>
        <position position="106"/>
    </location>
</feature>
<organism>
    <name type="scientific">Arabidopsis thaliana</name>
    <name type="common">Mouse-ear cress</name>
    <dbReference type="NCBI Taxonomy" id="3702"/>
    <lineage>
        <taxon>Eukaryota</taxon>
        <taxon>Viridiplantae</taxon>
        <taxon>Streptophyta</taxon>
        <taxon>Embryophyta</taxon>
        <taxon>Tracheophyta</taxon>
        <taxon>Spermatophyta</taxon>
        <taxon>Magnoliopsida</taxon>
        <taxon>eudicotyledons</taxon>
        <taxon>Gunneridae</taxon>
        <taxon>Pentapetalae</taxon>
        <taxon>rosids</taxon>
        <taxon>malvids</taxon>
        <taxon>Brassicales</taxon>
        <taxon>Brassicaceae</taxon>
        <taxon>Camelineae</taxon>
        <taxon>Arabidopsis</taxon>
    </lineage>
</organism>
<protein>
    <recommendedName>
        <fullName evidence="5">Non-classical arabinogalactan protein 30</fullName>
        <shortName evidence="5">AtAGP30</shortName>
    </recommendedName>
</protein>
<name>AGP30_ARATH</name>
<gene>
    <name evidence="5" type="primary">AGP30</name>
    <name evidence="7" type="ordered locus">At2g33790</name>
</gene>
<reference key="1">
    <citation type="journal article" date="1999" name="Nature">
        <title>Sequence and analysis of chromosome 2 of the plant Arabidopsis thaliana.</title>
        <authorList>
            <person name="Lin X."/>
            <person name="Kaul S."/>
            <person name="Rounsley S.D."/>
            <person name="Shea T.P."/>
            <person name="Benito M.-I."/>
            <person name="Town C.D."/>
            <person name="Fujii C.Y."/>
            <person name="Mason T.M."/>
            <person name="Bowman C.L."/>
            <person name="Barnstead M.E."/>
            <person name="Feldblyum T.V."/>
            <person name="Buell C.R."/>
            <person name="Ketchum K.A."/>
            <person name="Lee J.J."/>
            <person name="Ronning C.M."/>
            <person name="Koo H.L."/>
            <person name="Moffat K.S."/>
            <person name="Cronin L.A."/>
            <person name="Shen M."/>
            <person name="Pai G."/>
            <person name="Van Aken S."/>
            <person name="Umayam L."/>
            <person name="Tallon L.J."/>
            <person name="Gill J.E."/>
            <person name="Adams M.D."/>
            <person name="Carrera A.J."/>
            <person name="Creasy T.H."/>
            <person name="Goodman H.M."/>
            <person name="Somerville C.R."/>
            <person name="Copenhaver G.P."/>
            <person name="Preuss D."/>
            <person name="Nierman W.C."/>
            <person name="White O."/>
            <person name="Eisen J.A."/>
            <person name="Salzberg S.L."/>
            <person name="Fraser C.M."/>
            <person name="Venter J.C."/>
        </authorList>
    </citation>
    <scope>NUCLEOTIDE SEQUENCE [LARGE SCALE GENOMIC DNA]</scope>
    <source>
        <strain>cv. Columbia</strain>
    </source>
</reference>
<reference key="2">
    <citation type="journal article" date="2017" name="Plant J.">
        <title>Araport11: a complete reannotation of the Arabidopsis thaliana reference genome.</title>
        <authorList>
            <person name="Cheng C.Y."/>
            <person name="Krishnakumar V."/>
            <person name="Chan A.P."/>
            <person name="Thibaud-Nissen F."/>
            <person name="Schobel S."/>
            <person name="Town C.D."/>
        </authorList>
    </citation>
    <scope>GENOME REANNOTATION</scope>
    <source>
        <strain>cv. Columbia</strain>
    </source>
</reference>
<reference key="3">
    <citation type="journal article" date="2003" name="Science">
        <title>Empirical analysis of transcriptional activity in the Arabidopsis genome.</title>
        <authorList>
            <person name="Yamada K."/>
            <person name="Lim J."/>
            <person name="Dale J.M."/>
            <person name="Chen H."/>
            <person name="Shinn P."/>
            <person name="Palm C.J."/>
            <person name="Southwick A.M."/>
            <person name="Wu H.C."/>
            <person name="Kim C.J."/>
            <person name="Nguyen M."/>
            <person name="Pham P.K."/>
            <person name="Cheuk R.F."/>
            <person name="Karlin-Newmann G."/>
            <person name="Liu S.X."/>
            <person name="Lam B."/>
            <person name="Sakano H."/>
            <person name="Wu T."/>
            <person name="Yu G."/>
            <person name="Miranda M."/>
            <person name="Quach H.L."/>
            <person name="Tripp M."/>
            <person name="Chang C.H."/>
            <person name="Lee J.M."/>
            <person name="Toriumi M.J."/>
            <person name="Chan M.M."/>
            <person name="Tang C.C."/>
            <person name="Onodera C.S."/>
            <person name="Deng J.M."/>
            <person name="Akiyama K."/>
            <person name="Ansari Y."/>
            <person name="Arakawa T."/>
            <person name="Banh J."/>
            <person name="Banno F."/>
            <person name="Bowser L."/>
            <person name="Brooks S.Y."/>
            <person name="Carninci P."/>
            <person name="Chao Q."/>
            <person name="Choy N."/>
            <person name="Enju A."/>
            <person name="Goldsmith A.D."/>
            <person name="Gurjal M."/>
            <person name="Hansen N.F."/>
            <person name="Hayashizaki Y."/>
            <person name="Johnson-Hopson C."/>
            <person name="Hsuan V.W."/>
            <person name="Iida K."/>
            <person name="Karnes M."/>
            <person name="Khan S."/>
            <person name="Koesema E."/>
            <person name="Ishida J."/>
            <person name="Jiang P.X."/>
            <person name="Jones T."/>
            <person name="Kawai J."/>
            <person name="Kamiya A."/>
            <person name="Meyers C."/>
            <person name="Nakajima M."/>
            <person name="Narusaka M."/>
            <person name="Seki M."/>
            <person name="Sakurai T."/>
            <person name="Satou M."/>
            <person name="Tamse R."/>
            <person name="Vaysberg M."/>
            <person name="Wallender E.K."/>
            <person name="Wong C."/>
            <person name="Yamamura Y."/>
            <person name="Yuan S."/>
            <person name="Shinozaki K."/>
            <person name="Davis R.W."/>
            <person name="Theologis A."/>
            <person name="Ecker J.R."/>
        </authorList>
    </citation>
    <scope>NUCLEOTIDE SEQUENCE [LARGE SCALE MRNA]</scope>
    <source>
        <strain>cv. Columbia</strain>
    </source>
</reference>
<reference key="4">
    <citation type="submission" date="2004-12" db="EMBL/GenBank/DDBJ databases">
        <title>Arabidopsis ORF clones.</title>
        <authorList>
            <person name="Cheuk R.F."/>
            <person name="Chen H."/>
            <person name="Kim C.J."/>
            <person name="Shinn P."/>
            <person name="Ecker J.R."/>
        </authorList>
    </citation>
    <scope>NUCLEOTIDE SEQUENCE [LARGE SCALE MRNA]</scope>
    <source>
        <strain>cv. Columbia</strain>
    </source>
</reference>
<reference key="5">
    <citation type="journal article" date="2003" name="Plant J.">
        <title>AtAGP30, an arabinogalactan-protein in the cell walls of the primary root, plays a role in root regeneration and seed germination.</title>
        <authorList>
            <person name="van Hengel A.J."/>
            <person name="Roberts K."/>
        </authorList>
    </citation>
    <scope>FUNCTION</scope>
    <scope>TISSUE SPECIFICITY</scope>
    <scope>DEVELOPMENTAL STAGE</scope>
    <scope>DISRUPTION PHENOTYPE</scope>
</reference>